<gene>
    <name evidence="1" type="primary">mntH</name>
    <name type="ordered locus">Acry_3092</name>
</gene>
<sequence>MSDLVSRPGLSERTARAVADRLAGRAGWRNPLIFAGPAVVASIAYMDPGNFATNIQAGARYGYDLLWVVLLASLIAMLFQGLSARLGIVTGRNLAELCRDTLPPALTIPMWIISEIAAMATDLAEFLGGAIGIALLAHLPLMAGMAITGIVTYGILLLDRRGFRPMELVIGALVGVIALCYLAELLIVPVHWRQAALHTVLPSLPDAEALTIAVGIVGATVMPHALFLHSGLSGARVAPQDAAQRRRLVRYSNIEVLAALGVAGMVNMAMVAMAAGAFHPAHQGIAEIGEAYRTLSPLLGAGAAVIFLISLLASGVSSSVVGTLAGQMVMQGFVGFSIPIWLRRALTMIPGFVVIGLGVNPTRALVLSQVVLSLALPVPMLALLWFSTRRALMGALAVRGITAIAAIGGAIVILGLNVILLLQIFGVNVPLPG</sequence>
<reference key="1">
    <citation type="submission" date="2007-05" db="EMBL/GenBank/DDBJ databases">
        <title>Complete sequence of chromosome of Acidiphilium cryptum JF-5.</title>
        <authorList>
            <consortium name="US DOE Joint Genome Institute"/>
            <person name="Copeland A."/>
            <person name="Lucas S."/>
            <person name="Lapidus A."/>
            <person name="Barry K."/>
            <person name="Detter J.C."/>
            <person name="Glavina del Rio T."/>
            <person name="Hammon N."/>
            <person name="Israni S."/>
            <person name="Dalin E."/>
            <person name="Tice H."/>
            <person name="Pitluck S."/>
            <person name="Sims D."/>
            <person name="Brettin T."/>
            <person name="Bruce D."/>
            <person name="Han C."/>
            <person name="Schmutz J."/>
            <person name="Larimer F."/>
            <person name="Land M."/>
            <person name="Hauser L."/>
            <person name="Kyrpides N."/>
            <person name="Kim E."/>
            <person name="Magnuson T."/>
            <person name="Richardson P."/>
        </authorList>
    </citation>
    <scope>NUCLEOTIDE SEQUENCE [LARGE SCALE GENOMIC DNA]</scope>
    <source>
        <strain>JF-5</strain>
    </source>
</reference>
<keyword id="KW-0997">Cell inner membrane</keyword>
<keyword id="KW-1003">Cell membrane</keyword>
<keyword id="KW-0406">Ion transport</keyword>
<keyword id="KW-0472">Membrane</keyword>
<keyword id="KW-1185">Reference proteome</keyword>
<keyword id="KW-0769">Symport</keyword>
<keyword id="KW-0812">Transmembrane</keyword>
<keyword id="KW-1133">Transmembrane helix</keyword>
<keyword id="KW-0813">Transport</keyword>
<dbReference type="EMBL" id="CP000697">
    <property type="protein sequence ID" value="ABQ32280.1"/>
    <property type="molecule type" value="Genomic_DNA"/>
</dbReference>
<dbReference type="RefSeq" id="WP_012040535.1">
    <property type="nucleotide sequence ID" value="NC_009484.1"/>
</dbReference>
<dbReference type="SMR" id="A5G348"/>
<dbReference type="STRING" id="349163.Acry_3092"/>
<dbReference type="KEGG" id="acr:Acry_3092"/>
<dbReference type="eggNOG" id="COG1914">
    <property type="taxonomic scope" value="Bacteria"/>
</dbReference>
<dbReference type="HOGENOM" id="CLU_020088_2_0_5"/>
<dbReference type="Proteomes" id="UP000000245">
    <property type="component" value="Chromosome"/>
</dbReference>
<dbReference type="GO" id="GO:0005886">
    <property type="term" value="C:plasma membrane"/>
    <property type="evidence" value="ECO:0007669"/>
    <property type="project" value="UniProtKB-SubCell"/>
</dbReference>
<dbReference type="GO" id="GO:0015086">
    <property type="term" value="F:cadmium ion transmembrane transporter activity"/>
    <property type="evidence" value="ECO:0007669"/>
    <property type="project" value="TreeGrafter"/>
</dbReference>
<dbReference type="GO" id="GO:0005384">
    <property type="term" value="F:manganese ion transmembrane transporter activity"/>
    <property type="evidence" value="ECO:0007669"/>
    <property type="project" value="TreeGrafter"/>
</dbReference>
<dbReference type="GO" id="GO:0046872">
    <property type="term" value="F:metal ion binding"/>
    <property type="evidence" value="ECO:0007669"/>
    <property type="project" value="UniProtKB-UniRule"/>
</dbReference>
<dbReference type="GO" id="GO:0015293">
    <property type="term" value="F:symporter activity"/>
    <property type="evidence" value="ECO:0007669"/>
    <property type="project" value="UniProtKB-UniRule"/>
</dbReference>
<dbReference type="GO" id="GO:0034755">
    <property type="term" value="P:iron ion transmembrane transport"/>
    <property type="evidence" value="ECO:0007669"/>
    <property type="project" value="TreeGrafter"/>
</dbReference>
<dbReference type="HAMAP" id="MF_00221">
    <property type="entry name" value="NRAMP"/>
    <property type="match status" value="1"/>
</dbReference>
<dbReference type="InterPro" id="IPR001046">
    <property type="entry name" value="NRAMP_fam"/>
</dbReference>
<dbReference type="NCBIfam" id="TIGR01197">
    <property type="entry name" value="nramp"/>
    <property type="match status" value="1"/>
</dbReference>
<dbReference type="NCBIfam" id="NF037982">
    <property type="entry name" value="Nramp_1"/>
    <property type="match status" value="1"/>
</dbReference>
<dbReference type="NCBIfam" id="NF001923">
    <property type="entry name" value="PRK00701.1"/>
    <property type="match status" value="1"/>
</dbReference>
<dbReference type="PANTHER" id="PTHR11706:SF33">
    <property type="entry name" value="NATURAL RESISTANCE-ASSOCIATED MACROPHAGE PROTEIN 2"/>
    <property type="match status" value="1"/>
</dbReference>
<dbReference type="PANTHER" id="PTHR11706">
    <property type="entry name" value="SOLUTE CARRIER PROTEIN FAMILY 11 MEMBER"/>
    <property type="match status" value="1"/>
</dbReference>
<dbReference type="Pfam" id="PF01566">
    <property type="entry name" value="Nramp"/>
    <property type="match status" value="1"/>
</dbReference>
<dbReference type="PRINTS" id="PR00447">
    <property type="entry name" value="NATRESASSCMP"/>
</dbReference>
<proteinExistence type="inferred from homology"/>
<name>MNTH_ACICJ</name>
<comment type="function">
    <text evidence="1">H(+)-stimulated, divalent metal cation uptake system.</text>
</comment>
<comment type="subcellular location">
    <subcellularLocation>
        <location evidence="1">Cell inner membrane</location>
        <topology evidence="1">Multi-pass membrane protein</topology>
    </subcellularLocation>
</comment>
<comment type="similarity">
    <text evidence="1">Belongs to the NRAMP family.</text>
</comment>
<feature type="chain" id="PRO_0000325599" description="Divalent metal cation transporter MntH">
    <location>
        <begin position="1"/>
        <end position="433"/>
    </location>
</feature>
<feature type="transmembrane region" description="Helical" evidence="1">
    <location>
        <begin position="32"/>
        <end position="52"/>
    </location>
</feature>
<feature type="transmembrane region" description="Helical" evidence="1">
    <location>
        <begin position="62"/>
        <end position="82"/>
    </location>
</feature>
<feature type="transmembrane region" description="Helical" evidence="1">
    <location>
        <begin position="101"/>
        <end position="121"/>
    </location>
</feature>
<feature type="transmembrane region" description="Helical" evidence="1">
    <location>
        <begin position="131"/>
        <end position="151"/>
    </location>
</feature>
<feature type="transmembrane region" description="Helical" evidence="1">
    <location>
        <begin position="168"/>
        <end position="188"/>
    </location>
</feature>
<feature type="transmembrane region" description="Helical" evidence="1">
    <location>
        <begin position="209"/>
        <end position="229"/>
    </location>
</feature>
<feature type="transmembrane region" description="Helical" evidence="1">
    <location>
        <begin position="256"/>
        <end position="276"/>
    </location>
</feature>
<feature type="transmembrane region" description="Helical" evidence="1">
    <location>
        <begin position="296"/>
        <end position="316"/>
    </location>
</feature>
<feature type="transmembrane region" description="Helical" evidence="1">
    <location>
        <begin position="345"/>
        <end position="365"/>
    </location>
</feature>
<feature type="transmembrane region" description="Helical" evidence="1">
    <location>
        <begin position="366"/>
        <end position="386"/>
    </location>
</feature>
<feature type="transmembrane region" description="Helical" evidence="1">
    <location>
        <begin position="401"/>
        <end position="421"/>
    </location>
</feature>
<organism>
    <name type="scientific">Acidiphilium cryptum (strain JF-5)</name>
    <dbReference type="NCBI Taxonomy" id="349163"/>
    <lineage>
        <taxon>Bacteria</taxon>
        <taxon>Pseudomonadati</taxon>
        <taxon>Pseudomonadota</taxon>
        <taxon>Alphaproteobacteria</taxon>
        <taxon>Acetobacterales</taxon>
        <taxon>Acidocellaceae</taxon>
        <taxon>Acidiphilium</taxon>
    </lineage>
</organism>
<protein>
    <recommendedName>
        <fullName evidence="1">Divalent metal cation transporter MntH</fullName>
    </recommendedName>
</protein>
<accession>A5G348</accession>
<evidence type="ECO:0000255" key="1">
    <source>
        <dbReference type="HAMAP-Rule" id="MF_00221"/>
    </source>
</evidence>